<reference key="1">
    <citation type="journal article" date="2008" name="DNA Res.">
        <title>Determination of the genome sequence of Porphyromonas gingivalis strain ATCC 33277 and genomic comparison with strain W83 revealed extensive genome rearrangements in P. gingivalis.</title>
        <authorList>
            <person name="Naito M."/>
            <person name="Hirakawa H."/>
            <person name="Yamashita A."/>
            <person name="Ohara N."/>
            <person name="Shoji M."/>
            <person name="Yukitake H."/>
            <person name="Nakayama K."/>
            <person name="Toh H."/>
            <person name="Yoshimura F."/>
            <person name="Kuhara S."/>
            <person name="Hattori M."/>
            <person name="Hayashi T."/>
            <person name="Nakayama K."/>
        </authorList>
    </citation>
    <scope>NUCLEOTIDE SEQUENCE [LARGE SCALE GENOMIC DNA]</scope>
    <source>
        <strain>ATCC 33277 / DSM 20709 / CIP 103683 / JCM 12257 / NCTC 11834 / 2561</strain>
    </source>
</reference>
<sequence length="345" mass="39594">MADRRRTDDNKGAREVVLLLNIGSPDSPEVKDVARYLNSFLTDRRIITLPFLLRQLLVRGIITPFRKKSSAQKYRTVWDESTRSFPLISHTKAIARALAHTGRDVHVAMRYGKPTVADVLKELPHGRSLVVLPLFPHYAMSSYETAVEHCKAEIRRLCPNLSFRVVQPFYAHEAYIRVLADNIRPYLTKPFDKLILSYHGIPRDHLDKTTRQALDLRHPEGCCTEEDPTANVCYRYQTYRTTALIREALCLAEEQVEQVFQSRVGHTEWLRPYLIERLSAWPQEETKRILIACPSFVCDCLESLEEVADHGQSIFKKAGGADFTYIPCLNSGANWIDALRNILEE</sequence>
<dbReference type="EC" id="4.98.1.1" evidence="1"/>
<dbReference type="EMBL" id="AP009380">
    <property type="protein sequence ID" value="BAG32759.1"/>
    <property type="molecule type" value="Genomic_DNA"/>
</dbReference>
<dbReference type="RefSeq" id="WP_012457358.1">
    <property type="nucleotide sequence ID" value="NC_010729.1"/>
</dbReference>
<dbReference type="SMR" id="B2RHB4"/>
<dbReference type="GeneID" id="29255489"/>
<dbReference type="KEGG" id="pgn:PGN_0240"/>
<dbReference type="eggNOG" id="COG0276">
    <property type="taxonomic scope" value="Bacteria"/>
</dbReference>
<dbReference type="HOGENOM" id="CLU_018884_0_1_10"/>
<dbReference type="OrthoDB" id="9809741at2"/>
<dbReference type="BioCyc" id="PGIN431947:G1G2V-268-MONOMER"/>
<dbReference type="UniPathway" id="UPA00252">
    <property type="reaction ID" value="UER00325"/>
</dbReference>
<dbReference type="Proteomes" id="UP000008842">
    <property type="component" value="Chromosome"/>
</dbReference>
<dbReference type="GO" id="GO:0005737">
    <property type="term" value="C:cytoplasm"/>
    <property type="evidence" value="ECO:0007669"/>
    <property type="project" value="UniProtKB-SubCell"/>
</dbReference>
<dbReference type="GO" id="GO:0004325">
    <property type="term" value="F:ferrochelatase activity"/>
    <property type="evidence" value="ECO:0007669"/>
    <property type="project" value="UniProtKB-UniRule"/>
</dbReference>
<dbReference type="GO" id="GO:0046872">
    <property type="term" value="F:metal ion binding"/>
    <property type="evidence" value="ECO:0007669"/>
    <property type="project" value="UniProtKB-KW"/>
</dbReference>
<dbReference type="GO" id="GO:0006783">
    <property type="term" value="P:heme biosynthetic process"/>
    <property type="evidence" value="ECO:0007669"/>
    <property type="project" value="UniProtKB-UniRule"/>
</dbReference>
<dbReference type="CDD" id="cd00419">
    <property type="entry name" value="Ferrochelatase_C"/>
    <property type="match status" value="1"/>
</dbReference>
<dbReference type="CDD" id="cd03411">
    <property type="entry name" value="Ferrochelatase_N"/>
    <property type="match status" value="1"/>
</dbReference>
<dbReference type="Gene3D" id="3.40.50.1400">
    <property type="match status" value="2"/>
</dbReference>
<dbReference type="HAMAP" id="MF_00323">
    <property type="entry name" value="Ferrochelatase"/>
    <property type="match status" value="1"/>
</dbReference>
<dbReference type="InterPro" id="IPR001015">
    <property type="entry name" value="Ferrochelatase"/>
</dbReference>
<dbReference type="InterPro" id="IPR033644">
    <property type="entry name" value="Ferrochelatase_C"/>
</dbReference>
<dbReference type="InterPro" id="IPR033659">
    <property type="entry name" value="Ferrochelatase_N"/>
</dbReference>
<dbReference type="NCBIfam" id="TIGR00109">
    <property type="entry name" value="hemH"/>
    <property type="match status" value="1"/>
</dbReference>
<dbReference type="PANTHER" id="PTHR11108">
    <property type="entry name" value="FERROCHELATASE"/>
    <property type="match status" value="1"/>
</dbReference>
<dbReference type="PANTHER" id="PTHR11108:SF1">
    <property type="entry name" value="FERROCHELATASE, MITOCHONDRIAL"/>
    <property type="match status" value="1"/>
</dbReference>
<dbReference type="Pfam" id="PF00762">
    <property type="entry name" value="Ferrochelatase"/>
    <property type="match status" value="1"/>
</dbReference>
<dbReference type="SUPFAM" id="SSF53800">
    <property type="entry name" value="Chelatase"/>
    <property type="match status" value="1"/>
</dbReference>
<protein>
    <recommendedName>
        <fullName evidence="1">Ferrochelatase</fullName>
        <ecNumber evidence="1">4.98.1.1</ecNumber>
    </recommendedName>
    <alternativeName>
        <fullName evidence="1">Heme synthase</fullName>
    </alternativeName>
    <alternativeName>
        <fullName evidence="1">Protoheme ferro-lyase</fullName>
    </alternativeName>
</protein>
<gene>
    <name evidence="1" type="primary">hemH</name>
    <name type="ordered locus">PGN_0240</name>
</gene>
<name>HEMH_PORG3</name>
<proteinExistence type="inferred from homology"/>
<keyword id="KW-0963">Cytoplasm</keyword>
<keyword id="KW-0350">Heme biosynthesis</keyword>
<keyword id="KW-0408">Iron</keyword>
<keyword id="KW-0456">Lyase</keyword>
<keyword id="KW-0479">Metal-binding</keyword>
<keyword id="KW-0627">Porphyrin biosynthesis</keyword>
<organism>
    <name type="scientific">Porphyromonas gingivalis (strain ATCC 33277 / DSM 20709 / CIP 103683 / JCM 12257 / NCTC 11834 / 2561)</name>
    <dbReference type="NCBI Taxonomy" id="431947"/>
    <lineage>
        <taxon>Bacteria</taxon>
        <taxon>Pseudomonadati</taxon>
        <taxon>Bacteroidota</taxon>
        <taxon>Bacteroidia</taxon>
        <taxon>Bacteroidales</taxon>
        <taxon>Porphyromonadaceae</taxon>
        <taxon>Porphyromonas</taxon>
    </lineage>
</organism>
<accession>B2RHB4</accession>
<feature type="chain" id="PRO_1000116065" description="Ferrochelatase">
    <location>
        <begin position="1"/>
        <end position="345"/>
    </location>
</feature>
<feature type="binding site" evidence="1">
    <location>
        <position position="199"/>
    </location>
    <ligand>
        <name>Fe cation</name>
        <dbReference type="ChEBI" id="CHEBI:24875"/>
    </ligand>
</feature>
<feature type="binding site" evidence="1">
    <location>
        <position position="302"/>
    </location>
    <ligand>
        <name>Fe cation</name>
        <dbReference type="ChEBI" id="CHEBI:24875"/>
    </ligand>
</feature>
<comment type="function">
    <text evidence="1">Catalyzes the ferrous insertion into protoporphyrin IX.</text>
</comment>
<comment type="catalytic activity">
    <reaction evidence="1">
        <text>heme b + 2 H(+) = protoporphyrin IX + Fe(2+)</text>
        <dbReference type="Rhea" id="RHEA:22584"/>
        <dbReference type="ChEBI" id="CHEBI:15378"/>
        <dbReference type="ChEBI" id="CHEBI:29033"/>
        <dbReference type="ChEBI" id="CHEBI:57306"/>
        <dbReference type="ChEBI" id="CHEBI:60344"/>
        <dbReference type="EC" id="4.98.1.1"/>
    </reaction>
</comment>
<comment type="pathway">
    <text evidence="1">Porphyrin-containing compound metabolism; protoheme biosynthesis; protoheme from protoporphyrin-IX: step 1/1.</text>
</comment>
<comment type="subcellular location">
    <subcellularLocation>
        <location evidence="1">Cytoplasm</location>
    </subcellularLocation>
</comment>
<comment type="similarity">
    <text evidence="1">Belongs to the ferrochelatase family.</text>
</comment>
<evidence type="ECO:0000255" key="1">
    <source>
        <dbReference type="HAMAP-Rule" id="MF_00323"/>
    </source>
</evidence>